<proteinExistence type="evidence at transcript level"/>
<sequence length="450" mass="49842">MLVTAYLAFVVLLASCLGLELSRCRAKPSGRACSNPSFLRFQLDFYQVYFLALAADWLQAPYLYKLYQHYHFLEAQIAILYVCGLASTVLFGLVASSLVDWLGRKKSCVLFSLTYSLCCLTKLSRDYFVLLVGRALGGLSTALLFSAFEAWYIHEHLERHDFPTEWIPATFARAAFWNHVLAVAAGVAAEAVACWMGLGPVAPFVAAIPLLALAGALALHNWGENYDRQRAFSRTCAGGLRCLLSDRRVLLLGTIQALFESVIFIFVFLWTPVLDPHGAPLGIIFSSFMAASLLGSSLYRIATSKRYHLQPMHLLSLAVLIVVFSLFMLTFSTSPGQESPVESFIAFLLIELACGLYFPSMSFLRRKVIPETEQAGVLNWFRVPLHLLACLGLLVLHDSDRKTGTRNMFSICSAVMVMALLAVVGLFTVVRHDAELRVPSPTGEPYTPEL</sequence>
<accession>Q0VC03</accession>
<protein>
    <recommendedName>
        <fullName>Molybdate-anion transporter</fullName>
    </recommendedName>
    <alternativeName>
        <fullName>Major facilitator superfamily domain-containing protein 5</fullName>
    </alternativeName>
    <alternativeName>
        <fullName>Molybdate transporter 2 homolog</fullName>
    </alternativeName>
</protein>
<feature type="chain" id="PRO_0000273400" description="Molybdate-anion transporter">
    <location>
        <begin position="1"/>
        <end position="450"/>
    </location>
</feature>
<feature type="transmembrane region" description="Helical" evidence="2">
    <location>
        <begin position="1"/>
        <end position="21"/>
    </location>
</feature>
<feature type="transmembrane region" description="Helical" evidence="2">
    <location>
        <begin position="43"/>
        <end position="63"/>
    </location>
</feature>
<feature type="transmembrane region" description="Helical" evidence="2">
    <location>
        <begin position="79"/>
        <end position="99"/>
    </location>
</feature>
<feature type="transmembrane region" description="Helical" evidence="2">
    <location>
        <begin position="128"/>
        <end position="148"/>
    </location>
</feature>
<feature type="transmembrane region" description="Helical" evidence="2">
    <location>
        <begin position="176"/>
        <end position="196"/>
    </location>
</feature>
<feature type="transmembrane region" description="Helical" evidence="2">
    <location>
        <begin position="198"/>
        <end position="218"/>
    </location>
</feature>
<feature type="transmembrane region" description="Helical" evidence="2">
    <location>
        <begin position="249"/>
        <end position="269"/>
    </location>
</feature>
<feature type="transmembrane region" description="Helical" evidence="2">
    <location>
        <begin position="278"/>
        <end position="298"/>
    </location>
</feature>
<feature type="transmembrane region" description="Helical" evidence="2">
    <location>
        <begin position="311"/>
        <end position="331"/>
    </location>
</feature>
<feature type="transmembrane region" description="Helical" evidence="2">
    <location>
        <begin position="344"/>
        <end position="364"/>
    </location>
</feature>
<feature type="transmembrane region" description="Helical" evidence="2">
    <location>
        <begin position="376"/>
        <end position="396"/>
    </location>
</feature>
<feature type="transmembrane region" description="Helical" evidence="2">
    <location>
        <begin position="409"/>
        <end position="429"/>
    </location>
</feature>
<keyword id="KW-1003">Cell membrane</keyword>
<keyword id="KW-0406">Ion transport</keyword>
<keyword id="KW-0472">Membrane</keyword>
<keyword id="KW-1185">Reference proteome</keyword>
<keyword id="KW-0812">Transmembrane</keyword>
<keyword id="KW-1133">Transmembrane helix</keyword>
<keyword id="KW-0813">Transport</keyword>
<gene>
    <name type="primary">MFSD5</name>
</gene>
<organism>
    <name type="scientific">Bos taurus</name>
    <name type="common">Bovine</name>
    <dbReference type="NCBI Taxonomy" id="9913"/>
    <lineage>
        <taxon>Eukaryota</taxon>
        <taxon>Metazoa</taxon>
        <taxon>Chordata</taxon>
        <taxon>Craniata</taxon>
        <taxon>Vertebrata</taxon>
        <taxon>Euteleostomi</taxon>
        <taxon>Mammalia</taxon>
        <taxon>Eutheria</taxon>
        <taxon>Laurasiatheria</taxon>
        <taxon>Artiodactyla</taxon>
        <taxon>Ruminantia</taxon>
        <taxon>Pecora</taxon>
        <taxon>Bovidae</taxon>
        <taxon>Bovinae</taxon>
        <taxon>Bos</taxon>
    </lineage>
</organism>
<name>MFSD5_BOVIN</name>
<dbReference type="EMBL" id="BC120417">
    <property type="protein sequence ID" value="AAI20418.1"/>
    <property type="molecule type" value="mRNA"/>
</dbReference>
<dbReference type="RefSeq" id="NP_001068808.1">
    <property type="nucleotide sequence ID" value="NM_001075340.1"/>
</dbReference>
<dbReference type="SMR" id="Q0VC03"/>
<dbReference type="FunCoup" id="Q0VC03">
    <property type="interactions" value="2838"/>
</dbReference>
<dbReference type="STRING" id="9913.ENSBTAP00000011760"/>
<dbReference type="PaxDb" id="9913-ENSBTAP00000011760"/>
<dbReference type="Ensembl" id="ENSBTAT00000108612.1">
    <property type="protein sequence ID" value="ENSBTAP00000091819.1"/>
    <property type="gene ID" value="ENSBTAG00000008933.5"/>
</dbReference>
<dbReference type="Ensembl" id="ENSBTAT00000108849.1">
    <property type="protein sequence ID" value="ENSBTAP00000075638.1"/>
    <property type="gene ID" value="ENSBTAG00000008933.5"/>
</dbReference>
<dbReference type="Ensembl" id="ENSBTAT00000120244.1">
    <property type="protein sequence ID" value="ENSBTAP00000081377.1"/>
    <property type="gene ID" value="ENSBTAG00000008933.5"/>
</dbReference>
<dbReference type="GeneID" id="507921"/>
<dbReference type="KEGG" id="bta:507921"/>
<dbReference type="CTD" id="84975"/>
<dbReference type="VEuPathDB" id="HostDB:ENSBTAG00000008933"/>
<dbReference type="VGNC" id="VGNC:31440">
    <property type="gene designation" value="MFSD5"/>
</dbReference>
<dbReference type="eggNOG" id="KOG4332">
    <property type="taxonomic scope" value="Eukaryota"/>
</dbReference>
<dbReference type="GeneTree" id="ENSGT00390000012629"/>
<dbReference type="HOGENOM" id="CLU_034007_2_0_1"/>
<dbReference type="InParanoid" id="Q0VC03"/>
<dbReference type="OMA" id="CCGWVVL"/>
<dbReference type="OrthoDB" id="263957at2759"/>
<dbReference type="TreeFam" id="TF328562"/>
<dbReference type="Proteomes" id="UP000009136">
    <property type="component" value="Chromosome 5"/>
</dbReference>
<dbReference type="Bgee" id="ENSBTAG00000008933">
    <property type="expression patterns" value="Expressed in esophagus and 104 other cell types or tissues"/>
</dbReference>
<dbReference type="GO" id="GO:0005886">
    <property type="term" value="C:plasma membrane"/>
    <property type="evidence" value="ECO:0007669"/>
    <property type="project" value="UniProtKB-SubCell"/>
</dbReference>
<dbReference type="GO" id="GO:0015098">
    <property type="term" value="F:molybdate ion transmembrane transporter activity"/>
    <property type="evidence" value="ECO:0007669"/>
    <property type="project" value="Ensembl"/>
</dbReference>
<dbReference type="GO" id="GO:0006811">
    <property type="term" value="P:monoatomic ion transport"/>
    <property type="evidence" value="ECO:0007669"/>
    <property type="project" value="UniProtKB-KW"/>
</dbReference>
<dbReference type="CDD" id="cd17487">
    <property type="entry name" value="MFS_MFSD5_like"/>
    <property type="match status" value="1"/>
</dbReference>
<dbReference type="FunFam" id="1.20.1250.20:FF:000192">
    <property type="entry name" value="Major facilitator superfamily domain-containing 5"/>
    <property type="match status" value="1"/>
</dbReference>
<dbReference type="Gene3D" id="1.20.1250.20">
    <property type="entry name" value="MFS general substrate transporter like domains"/>
    <property type="match status" value="1"/>
</dbReference>
<dbReference type="InterPro" id="IPR036259">
    <property type="entry name" value="MFS_trans_sf"/>
</dbReference>
<dbReference type="InterPro" id="IPR008509">
    <property type="entry name" value="MOT2/MFSD5"/>
</dbReference>
<dbReference type="PANTHER" id="PTHR23516:SF1">
    <property type="entry name" value="MOLYBDATE-ANION TRANSPORTER"/>
    <property type="match status" value="1"/>
</dbReference>
<dbReference type="PANTHER" id="PTHR23516">
    <property type="entry name" value="SAM (S-ADENOSYL METHIONINE) TRANSPORTER"/>
    <property type="match status" value="1"/>
</dbReference>
<dbReference type="Pfam" id="PF05631">
    <property type="entry name" value="MFS_5"/>
    <property type="match status" value="1"/>
</dbReference>
<dbReference type="SUPFAM" id="SSF103473">
    <property type="entry name" value="MFS general substrate transporter"/>
    <property type="match status" value="1"/>
</dbReference>
<comment type="function">
    <text evidence="1">Mediates high-affinity intracellular uptake of the rare oligo-element molybdenum.</text>
</comment>
<comment type="subcellular location">
    <subcellularLocation>
        <location evidence="1">Cell membrane</location>
        <topology evidence="1">Multi-pass membrane protein</topology>
    </subcellularLocation>
</comment>
<comment type="similarity">
    <text evidence="3">Belongs to the major facilitator superfamily.</text>
</comment>
<evidence type="ECO:0000250" key="1"/>
<evidence type="ECO:0000255" key="2"/>
<evidence type="ECO:0000305" key="3"/>
<reference key="1">
    <citation type="submission" date="2006-08" db="EMBL/GenBank/DDBJ databases">
        <authorList>
            <consortium name="NIH - Mammalian Gene Collection (MGC) project"/>
        </authorList>
    </citation>
    <scope>NUCLEOTIDE SEQUENCE [LARGE SCALE MRNA]</scope>
    <source>
        <strain>Hereford</strain>
        <tissue>Fetal skin</tissue>
    </source>
</reference>